<sequence length="545" mass="64146">MVGEETSLRNRLSRSAENPEQDEAQKNLLDTHRNGHITMKQLIAKKRQLAAEAEELKPLFLKEVGCHFDDFVTNLIDKSASLDNGGCALTTFSILEEMKNNHRAKDLRAPPEQGKIFISRRSLLDELFEVDHIRTIYHMFIALLIIFILSTLVVDYIDEGRLVLEFSLLAYAFGQFPIVIWTWWAMFLSTLAIPYFLFQRWAHGYSKSSHPLIYSLIHGAFFLVFQLGILGFIPTYVVLAYTLPPASRFILILEQIRLVMKAHSYVRENVPRVLSAAKEKSSTVPVPTVNQYLYFLFAPTLIYRDSYPRTPTVRWGYVAMQFLQVFGCLFYVYYIFERLCAPLFRNIKQEPFSARVLVLCVFNSILPGVLMLFLSFFAFLHCWLNAFAEMLRFGDRMFYKDWWNSTSYSNYYRTWNVVVHDWLYYYVYKDLLWFFSKRFRPAAMLAVFALSAVVHEYALAVCLSYFYPVLFVLFMFFGMAFNFIVNDSRKRPVWNIMVRASLFLGHGVILCFYSQEWYARQRCPLKNPTFLDYVRPRTWTCRYVF</sequence>
<dbReference type="EC" id="2.3.1.26" evidence="1"/>
<dbReference type="EMBL" id="D86373">
    <property type="protein sequence ID" value="BAA25372.1"/>
    <property type="molecule type" value="mRNA"/>
</dbReference>
<dbReference type="RefSeq" id="NP_112380.1">
    <property type="nucleotide sequence ID" value="NM_031118.1"/>
</dbReference>
<dbReference type="SMR" id="O70536"/>
<dbReference type="FunCoup" id="O70536">
    <property type="interactions" value="1189"/>
</dbReference>
<dbReference type="STRING" id="10116.ENSRNOP00000005677"/>
<dbReference type="BindingDB" id="O70536"/>
<dbReference type="ChEMBL" id="CHEMBL285"/>
<dbReference type="PhosphoSitePlus" id="O70536"/>
<dbReference type="jPOST" id="O70536"/>
<dbReference type="PaxDb" id="10116-ENSRNOP00000005677"/>
<dbReference type="GeneID" id="81782"/>
<dbReference type="KEGG" id="rno:81782"/>
<dbReference type="UCSC" id="RGD:621641">
    <property type="organism name" value="rat"/>
</dbReference>
<dbReference type="AGR" id="RGD:621641"/>
<dbReference type="CTD" id="6646"/>
<dbReference type="RGD" id="621641">
    <property type="gene designation" value="Soat1"/>
</dbReference>
<dbReference type="eggNOG" id="KOG0380">
    <property type="taxonomic scope" value="Eukaryota"/>
</dbReference>
<dbReference type="InParanoid" id="O70536"/>
<dbReference type="OrthoDB" id="20917at9989"/>
<dbReference type="PhylomeDB" id="O70536"/>
<dbReference type="Reactome" id="R-RNO-8964038">
    <property type="pathway name" value="LDL clearance"/>
</dbReference>
<dbReference type="PRO" id="PR:O70536"/>
<dbReference type="Proteomes" id="UP000002494">
    <property type="component" value="Unplaced"/>
</dbReference>
<dbReference type="GO" id="GO:0005783">
    <property type="term" value="C:endoplasmic reticulum"/>
    <property type="evidence" value="ECO:0000266"/>
    <property type="project" value="RGD"/>
</dbReference>
<dbReference type="GO" id="GO:0005789">
    <property type="term" value="C:endoplasmic reticulum membrane"/>
    <property type="evidence" value="ECO:0000266"/>
    <property type="project" value="RGD"/>
</dbReference>
<dbReference type="GO" id="GO:0016020">
    <property type="term" value="C:membrane"/>
    <property type="evidence" value="ECO:0000266"/>
    <property type="project" value="RGD"/>
</dbReference>
<dbReference type="GO" id="GO:0015485">
    <property type="term" value="F:cholesterol binding"/>
    <property type="evidence" value="ECO:0000250"/>
    <property type="project" value="UniProtKB"/>
</dbReference>
<dbReference type="GO" id="GO:0034736">
    <property type="term" value="F:cholesterol O-acyltransferase activity"/>
    <property type="evidence" value="ECO:0000250"/>
    <property type="project" value="UniProtKB"/>
</dbReference>
<dbReference type="GO" id="GO:0000062">
    <property type="term" value="F:fatty-acyl-CoA binding"/>
    <property type="evidence" value="ECO:0000266"/>
    <property type="project" value="RGD"/>
</dbReference>
<dbReference type="GO" id="GO:0004772">
    <property type="term" value="F:sterol O-acyltransferase activity"/>
    <property type="evidence" value="ECO:0000314"/>
    <property type="project" value="RGD"/>
</dbReference>
<dbReference type="GO" id="GO:0033344">
    <property type="term" value="P:cholesterol efflux"/>
    <property type="evidence" value="ECO:0000266"/>
    <property type="project" value="RGD"/>
</dbReference>
<dbReference type="GO" id="GO:0042632">
    <property type="term" value="P:cholesterol homeostasis"/>
    <property type="evidence" value="ECO:0000250"/>
    <property type="project" value="UniProtKB"/>
</dbReference>
<dbReference type="GO" id="GO:0008203">
    <property type="term" value="P:cholesterol metabolic process"/>
    <property type="evidence" value="ECO:0000250"/>
    <property type="project" value="UniProtKB"/>
</dbReference>
<dbReference type="GO" id="GO:0010878">
    <property type="term" value="P:cholesterol storage"/>
    <property type="evidence" value="ECO:0000266"/>
    <property type="project" value="RGD"/>
</dbReference>
<dbReference type="GO" id="GO:0010742">
    <property type="term" value="P:macrophage derived foam cell differentiation"/>
    <property type="evidence" value="ECO:0000266"/>
    <property type="project" value="RGD"/>
</dbReference>
<dbReference type="GO" id="GO:0042986">
    <property type="term" value="P:positive regulation of amyloid precursor protein biosynthetic process"/>
    <property type="evidence" value="ECO:0000266"/>
    <property type="project" value="RGD"/>
</dbReference>
<dbReference type="GO" id="GO:0034379">
    <property type="term" value="P:very-low-density lipoprotein particle assembly"/>
    <property type="evidence" value="ECO:0000266"/>
    <property type="project" value="RGD"/>
</dbReference>
<dbReference type="InterPro" id="IPR004299">
    <property type="entry name" value="MBOAT_fam"/>
</dbReference>
<dbReference type="InterPro" id="IPR014371">
    <property type="entry name" value="Oat_ACAT_DAG_ARE"/>
</dbReference>
<dbReference type="InterPro" id="IPR030687">
    <property type="entry name" value="Sterol_acyltranf_meta"/>
</dbReference>
<dbReference type="PANTHER" id="PTHR10408">
    <property type="entry name" value="STEROL O-ACYLTRANSFERASE"/>
    <property type="match status" value="1"/>
</dbReference>
<dbReference type="PANTHER" id="PTHR10408:SF6">
    <property type="entry name" value="STEROL O-ACYLTRANSFERASE 1"/>
    <property type="match status" value="1"/>
</dbReference>
<dbReference type="Pfam" id="PF03062">
    <property type="entry name" value="MBOAT"/>
    <property type="match status" value="1"/>
</dbReference>
<dbReference type="PIRSF" id="PIRSF000439">
    <property type="entry name" value="Oat_ACAT_DAG_ARE"/>
    <property type="match status" value="1"/>
</dbReference>
<dbReference type="PIRSF" id="PIRSF500230">
    <property type="entry name" value="Sterol_acyltranf_ACAT"/>
    <property type="match status" value="1"/>
</dbReference>
<organism>
    <name type="scientific">Rattus norvegicus</name>
    <name type="common">Rat</name>
    <dbReference type="NCBI Taxonomy" id="10116"/>
    <lineage>
        <taxon>Eukaryota</taxon>
        <taxon>Metazoa</taxon>
        <taxon>Chordata</taxon>
        <taxon>Craniata</taxon>
        <taxon>Vertebrata</taxon>
        <taxon>Euteleostomi</taxon>
        <taxon>Mammalia</taxon>
        <taxon>Eutheria</taxon>
        <taxon>Euarchontoglires</taxon>
        <taxon>Glires</taxon>
        <taxon>Rodentia</taxon>
        <taxon>Myomorpha</taxon>
        <taxon>Muroidea</taxon>
        <taxon>Muridae</taxon>
        <taxon>Murinae</taxon>
        <taxon>Rattus</taxon>
    </lineage>
</organism>
<comment type="function">
    <text evidence="1">Catalyzes the formation of fatty acid-cholesterol esters, which are less soluble in membranes than cholesterol. Plays a role in lipoprotein assembly and dietary cholesterol absorption. Preferentially utilizes oleoyl-CoA ((9Z)-octadecenoyl-CoA) as substrate: shows a higher activity towards an acyl-CoA substrate with a double bond at the delta-9 position (9Z) than towards saturated acyl-CoA or an unsaturated acyl-CoA with a double bond at the delta-7 (7Z) or delta-11 (11Z) positions.</text>
</comment>
<comment type="catalytic activity">
    <reaction evidence="1">
        <text>a sterol + a long-chain fatty acyl-CoA = a long-chain 3-hydroxysterol ester + CoA</text>
        <dbReference type="Rhea" id="RHEA:59816"/>
        <dbReference type="ChEBI" id="CHEBI:15889"/>
        <dbReference type="ChEBI" id="CHEBI:57287"/>
        <dbReference type="ChEBI" id="CHEBI:83139"/>
        <dbReference type="ChEBI" id="CHEBI:232093"/>
        <dbReference type="EC" id="2.3.1.26"/>
    </reaction>
    <physiologicalReaction direction="left-to-right" evidence="1">
        <dbReference type="Rhea" id="RHEA:59817"/>
    </physiologicalReaction>
</comment>
<comment type="catalytic activity">
    <reaction evidence="1">
        <text>cholesterol + an acyl-CoA = a cholesterol ester + CoA</text>
        <dbReference type="Rhea" id="RHEA:17729"/>
        <dbReference type="ChEBI" id="CHEBI:16113"/>
        <dbReference type="ChEBI" id="CHEBI:17002"/>
        <dbReference type="ChEBI" id="CHEBI:57287"/>
        <dbReference type="ChEBI" id="CHEBI:58342"/>
    </reaction>
    <physiologicalReaction direction="left-to-right" evidence="1">
        <dbReference type="Rhea" id="RHEA:17730"/>
    </physiologicalReaction>
</comment>
<comment type="catalytic activity">
    <reaction evidence="1">
        <text>cholesterol + (9Z)-octadecenoyl-CoA = cholesteryl (9Z-octadecenoate) + CoA</text>
        <dbReference type="Rhea" id="RHEA:41436"/>
        <dbReference type="ChEBI" id="CHEBI:16113"/>
        <dbReference type="ChEBI" id="CHEBI:46898"/>
        <dbReference type="ChEBI" id="CHEBI:57287"/>
        <dbReference type="ChEBI" id="CHEBI:57387"/>
    </reaction>
    <physiologicalReaction direction="left-to-right" evidence="1">
        <dbReference type="Rhea" id="RHEA:41437"/>
    </physiologicalReaction>
</comment>
<comment type="catalytic activity">
    <reaction evidence="1">
        <text>cholesterol + hexadecanoyl-CoA = cholesteryl hexadecanoate + CoA</text>
        <dbReference type="Rhea" id="RHEA:42792"/>
        <dbReference type="ChEBI" id="CHEBI:3663"/>
        <dbReference type="ChEBI" id="CHEBI:16113"/>
        <dbReference type="ChEBI" id="CHEBI:57287"/>
        <dbReference type="ChEBI" id="CHEBI:57379"/>
    </reaction>
    <physiologicalReaction direction="left-to-right" evidence="1">
        <dbReference type="Rhea" id="RHEA:42793"/>
    </physiologicalReaction>
</comment>
<comment type="catalytic activity">
    <reaction evidence="1">
        <text>octadecanoyl-CoA + cholesterol = cholesteryl octadecanoate + CoA</text>
        <dbReference type="Rhea" id="RHEA:42812"/>
        <dbReference type="ChEBI" id="CHEBI:16113"/>
        <dbReference type="ChEBI" id="CHEBI:57287"/>
        <dbReference type="ChEBI" id="CHEBI:57394"/>
        <dbReference type="ChEBI" id="CHEBI:82750"/>
    </reaction>
    <physiologicalReaction direction="left-to-right" evidence="1">
        <dbReference type="Rhea" id="RHEA:42813"/>
    </physiologicalReaction>
</comment>
<comment type="catalytic activity">
    <reaction evidence="1">
        <text>(9Z,12Z)-octadecadienoyl-CoA + cholesterol = cholesteryl (9Z,12Z)-octadecadienoate + CoA</text>
        <dbReference type="Rhea" id="RHEA:42796"/>
        <dbReference type="ChEBI" id="CHEBI:16113"/>
        <dbReference type="ChEBI" id="CHEBI:41509"/>
        <dbReference type="ChEBI" id="CHEBI:57287"/>
        <dbReference type="ChEBI" id="CHEBI:57383"/>
    </reaction>
    <physiologicalReaction direction="left-to-right" evidence="1">
        <dbReference type="Rhea" id="RHEA:42797"/>
    </physiologicalReaction>
</comment>
<comment type="catalytic activity">
    <reaction evidence="1">
        <text>(5Z,8Z,11Z,14Z)-eicosatetraenoyl-CoA + cholesterol = cholesteryl (5Z,8Z,11Z,14Z)-eicosatetraenoate + CoA</text>
        <dbReference type="Rhea" id="RHEA:42816"/>
        <dbReference type="ChEBI" id="CHEBI:16113"/>
        <dbReference type="ChEBI" id="CHEBI:57287"/>
        <dbReference type="ChEBI" id="CHEBI:57368"/>
        <dbReference type="ChEBI" id="CHEBI:82751"/>
    </reaction>
    <physiologicalReaction direction="left-to-right" evidence="1">
        <dbReference type="Rhea" id="RHEA:42817"/>
    </physiologicalReaction>
</comment>
<comment type="catalytic activity">
    <reaction evidence="1">
        <text>(9Z)-hexadecenoyl-CoA + cholesterol = cholesteryl (9Z)-hexadecenoate + CoA</text>
        <dbReference type="Rhea" id="RHEA:64320"/>
        <dbReference type="ChEBI" id="CHEBI:16113"/>
        <dbReference type="ChEBI" id="CHEBI:57287"/>
        <dbReference type="ChEBI" id="CHEBI:61540"/>
        <dbReference type="ChEBI" id="CHEBI:84323"/>
    </reaction>
    <physiologicalReaction direction="left-to-right" evidence="1">
        <dbReference type="Rhea" id="RHEA:64321"/>
    </physiologicalReaction>
</comment>
<comment type="catalytic activity">
    <reaction evidence="1">
        <text>(11Z)-octadecenoyl-CoA + cholesterol = cholesteryl (11Z)-octadecenoate + CoA</text>
        <dbReference type="Rhea" id="RHEA:64324"/>
        <dbReference type="ChEBI" id="CHEBI:16113"/>
        <dbReference type="ChEBI" id="CHEBI:57287"/>
        <dbReference type="ChEBI" id="CHEBI:75121"/>
        <dbReference type="ChEBI" id="CHEBI:88768"/>
    </reaction>
    <physiologicalReaction direction="left-to-right" evidence="1">
        <dbReference type="Rhea" id="RHEA:64325"/>
    </physiologicalReaction>
</comment>
<comment type="catalytic activity">
    <reaction evidence="1">
        <text>(7Z)-octadecenoyl-CoA + cholesterol = cholesteryl (7Z)-octadecenoate + CoA</text>
        <dbReference type="Rhea" id="RHEA:64328"/>
        <dbReference type="ChEBI" id="CHEBI:16113"/>
        <dbReference type="ChEBI" id="CHEBI:57287"/>
        <dbReference type="ChEBI" id="CHEBI:152049"/>
        <dbReference type="ChEBI" id="CHEBI:152050"/>
    </reaction>
    <physiologicalReaction direction="left-to-right" evidence="1">
        <dbReference type="Rhea" id="RHEA:64329"/>
    </physiologicalReaction>
</comment>
<comment type="subunit">
    <text evidence="1">May form homo- or heterodimers. Interacts with UBIAD1.</text>
</comment>
<comment type="subcellular location">
    <subcellularLocation>
        <location evidence="1">Endoplasmic reticulum membrane</location>
        <topology evidence="1">Multi-pass membrane protein</topology>
    </subcellularLocation>
</comment>
<comment type="domain">
    <text evidence="1">Each protomer consists of 9 transmembrane segments, which enclose a cytosolic tunnel and a transmembrane tunnel that converge at the predicted catalytic site: acyl-CoA enters the active site through the cytosolic tunnel, whereas cholesterol enters from the side through the transmembrane tunnel.</text>
</comment>
<comment type="similarity">
    <text evidence="3">Belongs to the membrane-bound acyltransferase family. Sterol o-acyltransferase subfamily.</text>
</comment>
<protein>
    <recommendedName>
        <fullName evidence="3">Sterol O-acyltransferase 1</fullName>
        <ecNumber evidence="1">2.3.1.26</ecNumber>
    </recommendedName>
    <alternativeName>
        <fullName>Acyl-coenzyme A:cholesterol acyltransferase 1</fullName>
        <shortName>ACAT-1</shortName>
    </alternativeName>
    <alternativeName>
        <fullName>Cholesterol acyltransferase 1</fullName>
    </alternativeName>
</protein>
<name>SOAT1_RAT</name>
<keyword id="KW-0007">Acetylation</keyword>
<keyword id="KW-0012">Acyltransferase</keyword>
<keyword id="KW-0153">Cholesterol metabolism</keyword>
<keyword id="KW-1015">Disulfide bond</keyword>
<keyword id="KW-0256">Endoplasmic reticulum</keyword>
<keyword id="KW-0443">Lipid metabolism</keyword>
<keyword id="KW-0472">Membrane</keyword>
<keyword id="KW-0597">Phosphoprotein</keyword>
<keyword id="KW-1185">Reference proteome</keyword>
<keyword id="KW-0753">Steroid metabolism</keyword>
<keyword id="KW-1207">Sterol metabolism</keyword>
<keyword id="KW-0808">Transferase</keyword>
<keyword id="KW-0812">Transmembrane</keyword>
<keyword id="KW-1133">Transmembrane helix</keyword>
<feature type="chain" id="PRO_0000207643" description="Sterol O-acyltransferase 1">
    <location>
        <begin position="1"/>
        <end position="545"/>
    </location>
</feature>
<feature type="topological domain" description="Cytoplasmic" evidence="3">
    <location>
        <begin position="1"/>
        <end position="133"/>
    </location>
</feature>
<feature type="transmembrane region" description="Helical; Name=1" evidence="1">
    <location>
        <begin position="134"/>
        <end position="155"/>
    </location>
</feature>
<feature type="topological domain" description="Lumenal" evidence="3">
    <location>
        <begin position="156"/>
        <end position="175"/>
    </location>
</feature>
<feature type="transmembrane region" description="Helical; Name=2" evidence="1">
    <location>
        <begin position="176"/>
        <end position="201"/>
    </location>
</feature>
<feature type="topological domain" description="Cytoplasmic" evidence="3">
    <location>
        <begin position="202"/>
        <end position="213"/>
    </location>
</feature>
<feature type="transmembrane region" description="Helical; Name=3" evidence="1">
    <location>
        <begin position="214"/>
        <end position="239"/>
    </location>
</feature>
<feature type="topological domain" description="Lumenal" evidence="3">
    <location>
        <begin position="240"/>
        <end position="247"/>
    </location>
</feature>
<feature type="transmembrane region" description="Helical; Name=4" evidence="1">
    <location>
        <begin position="248"/>
        <end position="271"/>
    </location>
</feature>
<feature type="topological domain" description="Cytoplasmic" evidence="3">
    <location>
        <begin position="272"/>
        <end position="314"/>
    </location>
</feature>
<feature type="transmembrane region" description="Helical; Name=5" evidence="1">
    <location>
        <begin position="315"/>
        <end position="347"/>
    </location>
</feature>
<feature type="topological domain" description="Lumenal" evidence="3">
    <location>
        <begin position="348"/>
        <end position="364"/>
    </location>
</feature>
<feature type="transmembrane region" description="Helical; Name=6" evidence="1">
    <location>
        <begin position="365"/>
        <end position="390"/>
    </location>
</feature>
<feature type="topological domain" description="Cytoplasmic" evidence="3">
    <location>
        <begin position="391"/>
        <end position="438"/>
    </location>
</feature>
<feature type="transmembrane region" description="Helical; Name=7" evidence="1">
    <location>
        <begin position="439"/>
        <end position="463"/>
    </location>
</feature>
<feature type="topological domain" description="Lumenal" evidence="3">
    <location>
        <begin position="464"/>
        <end position="469"/>
    </location>
</feature>
<feature type="transmembrane region" description="Helical; Name=8" evidence="1">
    <location>
        <begin position="470"/>
        <end position="485"/>
    </location>
</feature>
<feature type="topological domain" description="Cytoplasmic" evidence="3">
    <location>
        <begin position="486"/>
        <end position="491"/>
    </location>
</feature>
<feature type="transmembrane region" description="Helical; Name=9" evidence="1">
    <location>
        <begin position="492"/>
        <end position="523"/>
    </location>
</feature>
<feature type="topological domain" description="Lumenal" evidence="3">
    <location>
        <begin position="524"/>
        <end position="545"/>
    </location>
</feature>
<feature type="region of interest" description="Disordered" evidence="2">
    <location>
        <begin position="1"/>
        <end position="24"/>
    </location>
</feature>
<feature type="short sequence motif" description="FYXDWWN motif" evidence="1">
    <location>
        <begin position="398"/>
        <end position="404"/>
    </location>
</feature>
<feature type="compositionally biased region" description="Polar residues" evidence="2">
    <location>
        <begin position="9"/>
        <end position="18"/>
    </location>
</feature>
<feature type="active site" evidence="1">
    <location>
        <position position="455"/>
    </location>
</feature>
<feature type="binding site" evidence="1">
    <location>
        <position position="132"/>
    </location>
    <ligand>
        <name>cholesterol</name>
        <dbReference type="ChEBI" id="CHEBI:16113"/>
    </ligand>
</feature>
<feature type="binding site" evidence="1">
    <location>
        <position position="410"/>
    </location>
    <ligand>
        <name>an acyl-CoA</name>
        <dbReference type="ChEBI" id="CHEBI:58342"/>
    </ligand>
</feature>
<feature type="binding site" evidence="1">
    <location>
        <position position="413"/>
    </location>
    <ligand>
        <name>an acyl-CoA</name>
        <dbReference type="ChEBI" id="CHEBI:58342"/>
    </ligand>
</feature>
<feature type="binding site" evidence="1">
    <location>
        <position position="416"/>
    </location>
    <ligand>
        <name>an acyl-CoA</name>
        <dbReference type="ChEBI" id="CHEBI:58342"/>
    </ligand>
</feature>
<feature type="binding site" evidence="1">
    <location>
        <position position="420"/>
    </location>
    <ligand>
        <name>an acyl-CoA</name>
        <dbReference type="ChEBI" id="CHEBI:58342"/>
    </ligand>
</feature>
<feature type="binding site" evidence="1">
    <location>
        <position position="428"/>
    </location>
    <ligand>
        <name>an acyl-CoA</name>
        <dbReference type="ChEBI" id="CHEBI:58342"/>
    </ligand>
</feature>
<feature type="binding site" evidence="1">
    <location>
        <position position="451"/>
    </location>
    <ligand>
        <name>an acyl-CoA</name>
        <dbReference type="ChEBI" id="CHEBI:58342"/>
    </ligand>
</feature>
<feature type="modified residue" description="N-acetylmethionine" evidence="1">
    <location>
        <position position="1"/>
    </location>
</feature>
<feature type="modified residue" description="Phosphoserine" evidence="1">
    <location>
        <position position="7"/>
    </location>
</feature>
<feature type="disulfide bond" evidence="1">
    <location>
        <begin position="523"/>
        <end position="541"/>
    </location>
</feature>
<gene>
    <name evidence="4" type="primary">Soat1</name>
    <name type="synonym">Acact</name>
    <name type="synonym">Acat</name>
</gene>
<reference key="1">
    <citation type="journal article" date="1998" name="Biochim. Biophys. Acta">
        <title>Molecular cloning, functional expression and tissue distribution of rat acyl-coenzyme A:cholesterol acyltransferase.</title>
        <authorList>
            <person name="Matsuda H."/>
            <person name="Hakamata H."/>
            <person name="Kawasaki T."/>
            <person name="Sakashita N."/>
            <person name="Miyazaki A."/>
            <person name="Takahashi K."/>
            <person name="Shichiri M."/>
            <person name="Horiuchi S."/>
        </authorList>
    </citation>
    <scope>NUCLEOTIDE SEQUENCE [MRNA]</scope>
    <source>
        <strain>Wistar</strain>
        <tissue>Adrenal gland</tissue>
    </source>
</reference>
<proteinExistence type="evidence at transcript level"/>
<evidence type="ECO:0000250" key="1">
    <source>
        <dbReference type="UniProtKB" id="P35610"/>
    </source>
</evidence>
<evidence type="ECO:0000256" key="2">
    <source>
        <dbReference type="SAM" id="MobiDB-lite"/>
    </source>
</evidence>
<evidence type="ECO:0000305" key="3"/>
<evidence type="ECO:0000312" key="4">
    <source>
        <dbReference type="RGD" id="621641"/>
    </source>
</evidence>
<accession>O70536</accession>